<keyword id="KW-0030">Aminoacyl-tRNA synthetase</keyword>
<keyword id="KW-0067">ATP-binding</keyword>
<keyword id="KW-0963">Cytoplasm</keyword>
<keyword id="KW-0436">Ligase</keyword>
<keyword id="KW-0479">Metal-binding</keyword>
<keyword id="KW-0547">Nucleotide-binding</keyword>
<keyword id="KW-0648">Protein biosynthesis</keyword>
<keyword id="KW-0862">Zinc</keyword>
<feature type="chain" id="PRO_0000240938" description="Cysteine--tRNA ligase">
    <location>
        <begin position="1"/>
        <end position="460"/>
    </location>
</feature>
<feature type="short sequence motif" description="'HIGH' region">
    <location>
        <begin position="30"/>
        <end position="40"/>
    </location>
</feature>
<feature type="short sequence motif" description="'KMSKS' region">
    <location>
        <begin position="266"/>
        <end position="270"/>
    </location>
</feature>
<feature type="binding site" evidence="1">
    <location>
        <position position="28"/>
    </location>
    <ligand>
        <name>Zn(2+)</name>
        <dbReference type="ChEBI" id="CHEBI:29105"/>
    </ligand>
</feature>
<feature type="binding site" evidence="1">
    <location>
        <position position="209"/>
    </location>
    <ligand>
        <name>Zn(2+)</name>
        <dbReference type="ChEBI" id="CHEBI:29105"/>
    </ligand>
</feature>
<feature type="binding site" evidence="1">
    <location>
        <position position="234"/>
    </location>
    <ligand>
        <name>Zn(2+)</name>
        <dbReference type="ChEBI" id="CHEBI:29105"/>
    </ligand>
</feature>
<feature type="binding site" evidence="1">
    <location>
        <position position="238"/>
    </location>
    <ligand>
        <name>Zn(2+)</name>
        <dbReference type="ChEBI" id="CHEBI:29105"/>
    </ligand>
</feature>
<feature type="binding site" evidence="1">
    <location>
        <position position="269"/>
    </location>
    <ligand>
        <name>ATP</name>
        <dbReference type="ChEBI" id="CHEBI:30616"/>
    </ligand>
</feature>
<sequence length="460" mass="51437">MLSIYNTLTKSKEVFKPLDGNKVRMYVCGMTVYDYCHLGHGRSMVAFDLVTRWLRFSGYELTYVRNITDIDDKIINRARDNGESFDALTARMIDAMHEDEARLNILKPDMEPRATDHIAGMHAMIQTLIDKGYAYAPGNGDVYYRVGKFQGYGKLSRKKIEDLRIGARIEVDESKEDPLDFVLWKGVKPGEPSWESPWGAGRPGWHIECSVMSTCCLGDTFDIHGGGSDLEFPHHENEIAQSEAATGKTYANAWLHCGMIRINGEKMSKSLNNFFTIRDVLEKYHPEVVRYLLVSSHYRSAINYSEDSLRESKAALERFYHALKGLPVAEPAGGEAFVERFSTAMNDDFGTPEACAVLFEMVREINRLRESDVTAAAGLAARLKQLASVLGVLQLEADDFLRAGAEGRVDAAQVEALIQARLAARAAKDWAESDRIRDQITAMGVLLEDGKGGTTWRLAD</sequence>
<reference key="1">
    <citation type="journal article" date="2005" name="J. Bacteriol.">
        <title>Whole-genome sequence analysis of Pseudomonas syringae pv. phaseolicola 1448A reveals divergence among pathovars in genes involved in virulence and transposition.</title>
        <authorList>
            <person name="Joardar V."/>
            <person name="Lindeberg M."/>
            <person name="Jackson R.W."/>
            <person name="Selengut J."/>
            <person name="Dodson R."/>
            <person name="Brinkac L.M."/>
            <person name="Daugherty S.C."/>
            <person name="DeBoy R.T."/>
            <person name="Durkin A.S."/>
            <person name="Gwinn Giglio M."/>
            <person name="Madupu R."/>
            <person name="Nelson W.C."/>
            <person name="Rosovitz M.J."/>
            <person name="Sullivan S.A."/>
            <person name="Crabtree J."/>
            <person name="Creasy T."/>
            <person name="Davidsen T.M."/>
            <person name="Haft D.H."/>
            <person name="Zafar N."/>
            <person name="Zhou L."/>
            <person name="Halpin R."/>
            <person name="Holley T."/>
            <person name="Khouri H.M."/>
            <person name="Feldblyum T.V."/>
            <person name="White O."/>
            <person name="Fraser C.M."/>
            <person name="Chatterjee A.K."/>
            <person name="Cartinhour S."/>
            <person name="Schneider D."/>
            <person name="Mansfield J.W."/>
            <person name="Collmer A."/>
            <person name="Buell R."/>
        </authorList>
    </citation>
    <scope>NUCLEOTIDE SEQUENCE [LARGE SCALE GENOMIC DNA]</scope>
    <source>
        <strain>1448A / Race 6</strain>
    </source>
</reference>
<proteinExistence type="inferred from homology"/>
<gene>
    <name evidence="1" type="primary">cysS</name>
    <name type="ordered locus">PSPPH_1679</name>
</gene>
<comment type="catalytic activity">
    <reaction evidence="1">
        <text>tRNA(Cys) + L-cysteine + ATP = L-cysteinyl-tRNA(Cys) + AMP + diphosphate</text>
        <dbReference type="Rhea" id="RHEA:17773"/>
        <dbReference type="Rhea" id="RHEA-COMP:9661"/>
        <dbReference type="Rhea" id="RHEA-COMP:9679"/>
        <dbReference type="ChEBI" id="CHEBI:30616"/>
        <dbReference type="ChEBI" id="CHEBI:33019"/>
        <dbReference type="ChEBI" id="CHEBI:35235"/>
        <dbReference type="ChEBI" id="CHEBI:78442"/>
        <dbReference type="ChEBI" id="CHEBI:78517"/>
        <dbReference type="ChEBI" id="CHEBI:456215"/>
        <dbReference type="EC" id="6.1.1.16"/>
    </reaction>
</comment>
<comment type="cofactor">
    <cofactor evidence="1">
        <name>Zn(2+)</name>
        <dbReference type="ChEBI" id="CHEBI:29105"/>
    </cofactor>
    <text evidence="1">Binds 1 zinc ion per subunit.</text>
</comment>
<comment type="subunit">
    <text evidence="1">Monomer.</text>
</comment>
<comment type="subcellular location">
    <subcellularLocation>
        <location evidence="1">Cytoplasm</location>
    </subcellularLocation>
</comment>
<comment type="similarity">
    <text evidence="1">Belongs to the class-I aminoacyl-tRNA synthetase family.</text>
</comment>
<name>SYC_PSE14</name>
<organism>
    <name type="scientific">Pseudomonas savastanoi pv. phaseolicola (strain 1448A / Race 6)</name>
    <name type="common">Pseudomonas syringae pv. phaseolicola (strain 1448A / Race 6)</name>
    <dbReference type="NCBI Taxonomy" id="264730"/>
    <lineage>
        <taxon>Bacteria</taxon>
        <taxon>Pseudomonadati</taxon>
        <taxon>Pseudomonadota</taxon>
        <taxon>Gammaproteobacteria</taxon>
        <taxon>Pseudomonadales</taxon>
        <taxon>Pseudomonadaceae</taxon>
        <taxon>Pseudomonas</taxon>
    </lineage>
</organism>
<dbReference type="EC" id="6.1.1.16" evidence="1"/>
<dbReference type="EMBL" id="CP000058">
    <property type="protein sequence ID" value="AAZ36493.1"/>
    <property type="molecule type" value="Genomic_DNA"/>
</dbReference>
<dbReference type="RefSeq" id="WP_011168154.1">
    <property type="nucleotide sequence ID" value="NC_005773.3"/>
</dbReference>
<dbReference type="SMR" id="Q48L06"/>
<dbReference type="KEGG" id="psp:PSPPH_1679"/>
<dbReference type="eggNOG" id="COG0215">
    <property type="taxonomic scope" value="Bacteria"/>
</dbReference>
<dbReference type="HOGENOM" id="CLU_013528_0_1_6"/>
<dbReference type="Proteomes" id="UP000000551">
    <property type="component" value="Chromosome"/>
</dbReference>
<dbReference type="GO" id="GO:0005829">
    <property type="term" value="C:cytosol"/>
    <property type="evidence" value="ECO:0007669"/>
    <property type="project" value="TreeGrafter"/>
</dbReference>
<dbReference type="GO" id="GO:0005524">
    <property type="term" value="F:ATP binding"/>
    <property type="evidence" value="ECO:0007669"/>
    <property type="project" value="UniProtKB-UniRule"/>
</dbReference>
<dbReference type="GO" id="GO:0004817">
    <property type="term" value="F:cysteine-tRNA ligase activity"/>
    <property type="evidence" value="ECO:0007669"/>
    <property type="project" value="UniProtKB-UniRule"/>
</dbReference>
<dbReference type="GO" id="GO:0008270">
    <property type="term" value="F:zinc ion binding"/>
    <property type="evidence" value="ECO:0007669"/>
    <property type="project" value="UniProtKB-UniRule"/>
</dbReference>
<dbReference type="GO" id="GO:0006423">
    <property type="term" value="P:cysteinyl-tRNA aminoacylation"/>
    <property type="evidence" value="ECO:0007669"/>
    <property type="project" value="UniProtKB-UniRule"/>
</dbReference>
<dbReference type="CDD" id="cd07963">
    <property type="entry name" value="Anticodon_Ia_Cys"/>
    <property type="match status" value="1"/>
</dbReference>
<dbReference type="CDD" id="cd00672">
    <property type="entry name" value="CysRS_core"/>
    <property type="match status" value="1"/>
</dbReference>
<dbReference type="FunFam" id="3.40.50.620:FF:000009">
    <property type="entry name" value="Cysteine--tRNA ligase"/>
    <property type="match status" value="1"/>
</dbReference>
<dbReference type="Gene3D" id="1.20.120.1910">
    <property type="entry name" value="Cysteine-tRNA ligase, C-terminal anti-codon recognition domain"/>
    <property type="match status" value="1"/>
</dbReference>
<dbReference type="Gene3D" id="3.40.50.620">
    <property type="entry name" value="HUPs"/>
    <property type="match status" value="1"/>
</dbReference>
<dbReference type="HAMAP" id="MF_00041">
    <property type="entry name" value="Cys_tRNA_synth"/>
    <property type="match status" value="1"/>
</dbReference>
<dbReference type="InterPro" id="IPR015803">
    <property type="entry name" value="Cys-tRNA-ligase"/>
</dbReference>
<dbReference type="InterPro" id="IPR015273">
    <property type="entry name" value="Cys-tRNA-synt_Ia_DALR"/>
</dbReference>
<dbReference type="InterPro" id="IPR024909">
    <property type="entry name" value="Cys-tRNA/MSH_ligase"/>
</dbReference>
<dbReference type="InterPro" id="IPR056411">
    <property type="entry name" value="CysS_C"/>
</dbReference>
<dbReference type="InterPro" id="IPR014729">
    <property type="entry name" value="Rossmann-like_a/b/a_fold"/>
</dbReference>
<dbReference type="InterPro" id="IPR032678">
    <property type="entry name" value="tRNA-synt_1_cat_dom"/>
</dbReference>
<dbReference type="InterPro" id="IPR009080">
    <property type="entry name" value="tRNAsynth_Ia_anticodon-bd"/>
</dbReference>
<dbReference type="NCBIfam" id="TIGR00435">
    <property type="entry name" value="cysS"/>
    <property type="match status" value="1"/>
</dbReference>
<dbReference type="PANTHER" id="PTHR10890:SF3">
    <property type="entry name" value="CYSTEINE--TRNA LIGASE, CYTOPLASMIC"/>
    <property type="match status" value="1"/>
</dbReference>
<dbReference type="PANTHER" id="PTHR10890">
    <property type="entry name" value="CYSTEINYL-TRNA SYNTHETASE"/>
    <property type="match status" value="1"/>
</dbReference>
<dbReference type="Pfam" id="PF23493">
    <property type="entry name" value="CysS_C"/>
    <property type="match status" value="1"/>
</dbReference>
<dbReference type="Pfam" id="PF09190">
    <property type="entry name" value="DALR_2"/>
    <property type="match status" value="1"/>
</dbReference>
<dbReference type="Pfam" id="PF01406">
    <property type="entry name" value="tRNA-synt_1e"/>
    <property type="match status" value="1"/>
</dbReference>
<dbReference type="PRINTS" id="PR00983">
    <property type="entry name" value="TRNASYNTHCYS"/>
</dbReference>
<dbReference type="SMART" id="SM00840">
    <property type="entry name" value="DALR_2"/>
    <property type="match status" value="1"/>
</dbReference>
<dbReference type="SUPFAM" id="SSF47323">
    <property type="entry name" value="Anticodon-binding domain of a subclass of class I aminoacyl-tRNA synthetases"/>
    <property type="match status" value="1"/>
</dbReference>
<dbReference type="SUPFAM" id="SSF52374">
    <property type="entry name" value="Nucleotidylyl transferase"/>
    <property type="match status" value="1"/>
</dbReference>
<evidence type="ECO:0000255" key="1">
    <source>
        <dbReference type="HAMAP-Rule" id="MF_00041"/>
    </source>
</evidence>
<protein>
    <recommendedName>
        <fullName evidence="1">Cysteine--tRNA ligase</fullName>
        <ecNumber evidence="1">6.1.1.16</ecNumber>
    </recommendedName>
    <alternativeName>
        <fullName evidence="1">Cysteinyl-tRNA synthetase</fullName>
        <shortName evidence="1">CysRS</shortName>
    </alternativeName>
</protein>
<accession>Q48L06</accession>